<keyword id="KW-0687">Ribonucleoprotein</keyword>
<keyword id="KW-0689">Ribosomal protein</keyword>
<keyword id="KW-0694">RNA-binding</keyword>
<keyword id="KW-0699">rRNA-binding</keyword>
<reference key="1">
    <citation type="submission" date="2007-05" db="EMBL/GenBank/DDBJ databases">
        <title>Complete sequence of Thermotoga petrophila RKU-1.</title>
        <authorList>
            <consortium name="US DOE Joint Genome Institute"/>
            <person name="Copeland A."/>
            <person name="Lucas S."/>
            <person name="Lapidus A."/>
            <person name="Barry K."/>
            <person name="Glavina del Rio T."/>
            <person name="Dalin E."/>
            <person name="Tice H."/>
            <person name="Pitluck S."/>
            <person name="Sims D."/>
            <person name="Brettin T."/>
            <person name="Bruce D."/>
            <person name="Detter J.C."/>
            <person name="Han C."/>
            <person name="Tapia R."/>
            <person name="Schmutz J."/>
            <person name="Larimer F."/>
            <person name="Land M."/>
            <person name="Hauser L."/>
            <person name="Kyrpides N."/>
            <person name="Mikhailova N."/>
            <person name="Nelson K."/>
            <person name="Gogarten J.P."/>
            <person name="Noll K."/>
            <person name="Richardson P."/>
        </authorList>
    </citation>
    <scope>NUCLEOTIDE SEQUENCE [LARGE SCALE GENOMIC DNA]</scope>
    <source>
        <strain>ATCC BAA-488 / DSM 13995 / JCM 10881 / RKU-1</strain>
    </source>
</reference>
<comment type="function">
    <text evidence="1">One of the primary rRNA binding proteins, this protein initially binds near the 5'-end of the 23S rRNA. It is important during the early stages of 50S assembly. It makes multiple contacts with different domains of the 23S rRNA in the assembled 50S subunit and ribosome.</text>
</comment>
<comment type="function">
    <text evidence="1">Forms part of the polypeptide exit tunnel.</text>
</comment>
<comment type="subunit">
    <text evidence="1">Part of the 50S ribosomal subunit.</text>
</comment>
<comment type="similarity">
    <text evidence="1">Belongs to the universal ribosomal protein uL4 family.</text>
</comment>
<gene>
    <name evidence="1" type="primary">rplD</name>
    <name type="ordered locus">Tpet_1293</name>
</gene>
<name>RL4_THEP1</name>
<feature type="chain" id="PRO_1000052522" description="Large ribosomal subunit protein uL4">
    <location>
        <begin position="1"/>
        <end position="235"/>
    </location>
</feature>
<feature type="region of interest" description="Disordered" evidence="2">
    <location>
        <begin position="45"/>
        <end position="75"/>
    </location>
</feature>
<feature type="compositionally biased region" description="Basic residues" evidence="2">
    <location>
        <begin position="65"/>
        <end position="75"/>
    </location>
</feature>
<protein>
    <recommendedName>
        <fullName evidence="1">Large ribosomal subunit protein uL4</fullName>
    </recommendedName>
    <alternativeName>
        <fullName evidence="3">50S ribosomal protein L4</fullName>
    </alternativeName>
</protein>
<evidence type="ECO:0000255" key="1">
    <source>
        <dbReference type="HAMAP-Rule" id="MF_01328"/>
    </source>
</evidence>
<evidence type="ECO:0000256" key="2">
    <source>
        <dbReference type="SAM" id="MobiDB-lite"/>
    </source>
</evidence>
<evidence type="ECO:0000305" key="3"/>
<dbReference type="EMBL" id="CP000702">
    <property type="protein sequence ID" value="ABQ47307.1"/>
    <property type="molecule type" value="Genomic_DNA"/>
</dbReference>
<dbReference type="RefSeq" id="WP_011943785.1">
    <property type="nucleotide sequence ID" value="NC_009486.1"/>
</dbReference>
<dbReference type="SMR" id="A5IM84"/>
<dbReference type="STRING" id="390874.Tpet_1293"/>
<dbReference type="KEGG" id="tpt:Tpet_1293"/>
<dbReference type="eggNOG" id="COG0088">
    <property type="taxonomic scope" value="Bacteria"/>
</dbReference>
<dbReference type="HOGENOM" id="CLU_041575_5_2_0"/>
<dbReference type="Proteomes" id="UP000006558">
    <property type="component" value="Chromosome"/>
</dbReference>
<dbReference type="GO" id="GO:1990904">
    <property type="term" value="C:ribonucleoprotein complex"/>
    <property type="evidence" value="ECO:0007669"/>
    <property type="project" value="UniProtKB-KW"/>
</dbReference>
<dbReference type="GO" id="GO:0005840">
    <property type="term" value="C:ribosome"/>
    <property type="evidence" value="ECO:0007669"/>
    <property type="project" value="UniProtKB-KW"/>
</dbReference>
<dbReference type="GO" id="GO:0019843">
    <property type="term" value="F:rRNA binding"/>
    <property type="evidence" value="ECO:0007669"/>
    <property type="project" value="UniProtKB-UniRule"/>
</dbReference>
<dbReference type="GO" id="GO:0003735">
    <property type="term" value="F:structural constituent of ribosome"/>
    <property type="evidence" value="ECO:0007669"/>
    <property type="project" value="InterPro"/>
</dbReference>
<dbReference type="GO" id="GO:0006412">
    <property type="term" value="P:translation"/>
    <property type="evidence" value="ECO:0007669"/>
    <property type="project" value="UniProtKB-UniRule"/>
</dbReference>
<dbReference type="FunFam" id="3.40.1370.10:FF:000020">
    <property type="entry name" value="50S ribosomal protein L4"/>
    <property type="match status" value="1"/>
</dbReference>
<dbReference type="Gene3D" id="3.40.1370.10">
    <property type="match status" value="1"/>
</dbReference>
<dbReference type="HAMAP" id="MF_01328_B">
    <property type="entry name" value="Ribosomal_uL4_B"/>
    <property type="match status" value="1"/>
</dbReference>
<dbReference type="InterPro" id="IPR002136">
    <property type="entry name" value="Ribosomal_uL4"/>
</dbReference>
<dbReference type="InterPro" id="IPR013005">
    <property type="entry name" value="Ribosomal_uL4-like"/>
</dbReference>
<dbReference type="InterPro" id="IPR023574">
    <property type="entry name" value="Ribosomal_uL4_dom_sf"/>
</dbReference>
<dbReference type="NCBIfam" id="TIGR03953">
    <property type="entry name" value="rplD_bact"/>
    <property type="match status" value="1"/>
</dbReference>
<dbReference type="PANTHER" id="PTHR10746">
    <property type="entry name" value="50S RIBOSOMAL PROTEIN L4"/>
    <property type="match status" value="1"/>
</dbReference>
<dbReference type="PANTHER" id="PTHR10746:SF6">
    <property type="entry name" value="LARGE RIBOSOMAL SUBUNIT PROTEIN UL4M"/>
    <property type="match status" value="1"/>
</dbReference>
<dbReference type="Pfam" id="PF00573">
    <property type="entry name" value="Ribosomal_L4"/>
    <property type="match status" value="1"/>
</dbReference>
<dbReference type="SUPFAM" id="SSF52166">
    <property type="entry name" value="Ribosomal protein L4"/>
    <property type="match status" value="1"/>
</dbReference>
<organism>
    <name type="scientific">Thermotoga petrophila (strain ATCC BAA-488 / DSM 13995 / JCM 10881 / RKU-1)</name>
    <dbReference type="NCBI Taxonomy" id="390874"/>
    <lineage>
        <taxon>Bacteria</taxon>
        <taxon>Thermotogati</taxon>
        <taxon>Thermotogota</taxon>
        <taxon>Thermotogae</taxon>
        <taxon>Thermotogales</taxon>
        <taxon>Thermotogaceae</taxon>
        <taxon>Thermotoga</taxon>
    </lineage>
</organism>
<sequence>MAQVDLLNVKGEKVGTLEISDFVFNIDPNYDVMWRYVDMQLSNRRAGTASTKTRGEVSGGGRKPWPQKHTGRARHGSIRSPIWRHGGIAHGPKPRDWSKKLNKKMKKLALRSALSVKYRENKLFVLDDLKLERPKTKFLKEILQNLQLSDKKTLIVLPWKDEGYMNVKLSGKNLPNVKVIIADNPNNSKNGEKAVRIDGLNVFDMLKYDYLVLTQDMVSKIEEVLGNEAGKALTE</sequence>
<proteinExistence type="inferred from homology"/>
<accession>A5IM84</accession>